<name>FLGI_NITMU</name>
<sequence>MRYPVSTGIAAPAWFAFFCAWAGLWTFSLPVQAERIKDLASIQGIRPNQLIGYGLVVGLDGTGDQTVQTPFTIQSLNNMLMQLGINVPPGTNMRLRNVAAVMVTAALPPLAQPGQAIDVTVSSMGNARSLRGGTLLMTPLKGIDGQVYGVAQGNLLVGGIGAAASGSKVQVNHLNAGRIPGGATVERAVPVALGQNDMIRLELNTIDFSTAKRIVDAVNTRFGMGTAAALDGRAIQVRTPPESDQRVAFLAEMESLAINPAQMPARVIVNSRTGSVVMNQAATVDQCAIAHGNLTVVISTEPVISQPGPFSSGRTVQAQRSTIEIKQESGMLTMVEGASLAEVVKALNAIGATPQDLLAILQAMKSAGALRAELEII</sequence>
<accession>Q2Y9E0</accession>
<dbReference type="EMBL" id="CP000103">
    <property type="protein sequence ID" value="ABB74631.1"/>
    <property type="molecule type" value="Genomic_DNA"/>
</dbReference>
<dbReference type="RefSeq" id="WP_011380667.1">
    <property type="nucleotide sequence ID" value="NC_007614.1"/>
</dbReference>
<dbReference type="SMR" id="Q2Y9E0"/>
<dbReference type="STRING" id="323848.Nmul_A1328"/>
<dbReference type="KEGG" id="nmu:Nmul_A1328"/>
<dbReference type="eggNOG" id="COG1706">
    <property type="taxonomic scope" value="Bacteria"/>
</dbReference>
<dbReference type="HOGENOM" id="CLU_045235_1_0_4"/>
<dbReference type="OrthoDB" id="9786431at2"/>
<dbReference type="Proteomes" id="UP000002718">
    <property type="component" value="Chromosome"/>
</dbReference>
<dbReference type="GO" id="GO:0009428">
    <property type="term" value="C:bacterial-type flagellum basal body, distal rod, P ring"/>
    <property type="evidence" value="ECO:0007669"/>
    <property type="project" value="InterPro"/>
</dbReference>
<dbReference type="GO" id="GO:0030288">
    <property type="term" value="C:outer membrane-bounded periplasmic space"/>
    <property type="evidence" value="ECO:0007669"/>
    <property type="project" value="InterPro"/>
</dbReference>
<dbReference type="GO" id="GO:0005198">
    <property type="term" value="F:structural molecule activity"/>
    <property type="evidence" value="ECO:0007669"/>
    <property type="project" value="InterPro"/>
</dbReference>
<dbReference type="GO" id="GO:0071973">
    <property type="term" value="P:bacterial-type flagellum-dependent cell motility"/>
    <property type="evidence" value="ECO:0007669"/>
    <property type="project" value="InterPro"/>
</dbReference>
<dbReference type="HAMAP" id="MF_00416">
    <property type="entry name" value="FlgI"/>
    <property type="match status" value="1"/>
</dbReference>
<dbReference type="InterPro" id="IPR001782">
    <property type="entry name" value="Flag_FlgI"/>
</dbReference>
<dbReference type="NCBIfam" id="NF003676">
    <property type="entry name" value="PRK05303.1"/>
    <property type="match status" value="1"/>
</dbReference>
<dbReference type="PANTHER" id="PTHR30381">
    <property type="entry name" value="FLAGELLAR P-RING PERIPLASMIC PROTEIN FLGI"/>
    <property type="match status" value="1"/>
</dbReference>
<dbReference type="PANTHER" id="PTHR30381:SF0">
    <property type="entry name" value="FLAGELLAR P-RING PROTEIN"/>
    <property type="match status" value="1"/>
</dbReference>
<dbReference type="Pfam" id="PF02119">
    <property type="entry name" value="FlgI"/>
    <property type="match status" value="1"/>
</dbReference>
<dbReference type="PRINTS" id="PR01010">
    <property type="entry name" value="FLGPRINGFLGI"/>
</dbReference>
<reference key="1">
    <citation type="submission" date="2005-08" db="EMBL/GenBank/DDBJ databases">
        <title>Complete sequence of chromosome 1 of Nitrosospira multiformis ATCC 25196.</title>
        <authorList>
            <person name="Copeland A."/>
            <person name="Lucas S."/>
            <person name="Lapidus A."/>
            <person name="Barry K."/>
            <person name="Detter J.C."/>
            <person name="Glavina T."/>
            <person name="Hammon N."/>
            <person name="Israni S."/>
            <person name="Pitluck S."/>
            <person name="Chain P."/>
            <person name="Malfatti S."/>
            <person name="Shin M."/>
            <person name="Vergez L."/>
            <person name="Schmutz J."/>
            <person name="Larimer F."/>
            <person name="Land M."/>
            <person name="Hauser L."/>
            <person name="Kyrpides N."/>
            <person name="Lykidis A."/>
            <person name="Richardson P."/>
        </authorList>
    </citation>
    <scope>NUCLEOTIDE SEQUENCE [LARGE SCALE GENOMIC DNA]</scope>
    <source>
        <strain>ATCC 25196 / NCIMB 11849 / C 71</strain>
    </source>
</reference>
<organism>
    <name type="scientific">Nitrosospira multiformis (strain ATCC 25196 / NCIMB 11849 / C 71)</name>
    <dbReference type="NCBI Taxonomy" id="323848"/>
    <lineage>
        <taxon>Bacteria</taxon>
        <taxon>Pseudomonadati</taxon>
        <taxon>Pseudomonadota</taxon>
        <taxon>Betaproteobacteria</taxon>
        <taxon>Nitrosomonadales</taxon>
        <taxon>Nitrosomonadaceae</taxon>
        <taxon>Nitrosospira</taxon>
    </lineage>
</organism>
<evidence type="ECO:0000255" key="1">
    <source>
        <dbReference type="HAMAP-Rule" id="MF_00416"/>
    </source>
</evidence>
<gene>
    <name evidence="1" type="primary">flgI</name>
    <name type="ordered locus">Nmul_A1328</name>
</gene>
<feature type="signal peptide" evidence="1">
    <location>
        <begin position="1"/>
        <end position="33"/>
    </location>
</feature>
<feature type="chain" id="PRO_0000236307" description="Flagellar P-ring protein">
    <location>
        <begin position="34"/>
        <end position="377"/>
    </location>
</feature>
<proteinExistence type="inferred from homology"/>
<comment type="function">
    <text evidence="1">Assembles around the rod to form the L-ring and probably protects the motor/basal body from shearing forces during rotation.</text>
</comment>
<comment type="subunit">
    <text evidence="1">The basal body constitutes a major portion of the flagellar organelle and consists of four rings (L,P,S, and M) mounted on a central rod.</text>
</comment>
<comment type="subcellular location">
    <subcellularLocation>
        <location evidence="1">Periplasm</location>
    </subcellularLocation>
    <subcellularLocation>
        <location evidence="1">Bacterial flagellum basal body</location>
    </subcellularLocation>
</comment>
<comment type="similarity">
    <text evidence="1">Belongs to the FlgI family.</text>
</comment>
<keyword id="KW-0975">Bacterial flagellum</keyword>
<keyword id="KW-0574">Periplasm</keyword>
<keyword id="KW-1185">Reference proteome</keyword>
<keyword id="KW-0732">Signal</keyword>
<protein>
    <recommendedName>
        <fullName evidence="1">Flagellar P-ring protein</fullName>
    </recommendedName>
    <alternativeName>
        <fullName evidence="1">Basal body P-ring protein</fullName>
    </alternativeName>
</protein>